<feature type="chain" id="PRO_1000009767" description="dCTP deaminase">
    <location>
        <begin position="1"/>
        <end position="188"/>
    </location>
</feature>
<feature type="active site" description="Proton donor/acceptor" evidence="1">
    <location>
        <position position="137"/>
    </location>
</feature>
<feature type="binding site" evidence="1">
    <location>
        <begin position="111"/>
        <end position="116"/>
    </location>
    <ligand>
        <name>dCTP</name>
        <dbReference type="ChEBI" id="CHEBI:61481"/>
    </ligand>
</feature>
<feature type="binding site" evidence="1">
    <location>
        <begin position="135"/>
        <end position="137"/>
    </location>
    <ligand>
        <name>dCTP</name>
        <dbReference type="ChEBI" id="CHEBI:61481"/>
    </ligand>
</feature>
<feature type="binding site" evidence="1">
    <location>
        <position position="156"/>
    </location>
    <ligand>
        <name>dCTP</name>
        <dbReference type="ChEBI" id="CHEBI:61481"/>
    </ligand>
</feature>
<feature type="binding site" evidence="1">
    <location>
        <position position="170"/>
    </location>
    <ligand>
        <name>dCTP</name>
        <dbReference type="ChEBI" id="CHEBI:61481"/>
    </ligand>
</feature>
<feature type="binding site" evidence="1">
    <location>
        <position position="180"/>
    </location>
    <ligand>
        <name>dCTP</name>
        <dbReference type="ChEBI" id="CHEBI:61481"/>
    </ligand>
</feature>
<organism>
    <name type="scientific">Neisseria gonorrhoeae (strain ATCC 700825 / FA 1090)</name>
    <dbReference type="NCBI Taxonomy" id="242231"/>
    <lineage>
        <taxon>Bacteria</taxon>
        <taxon>Pseudomonadati</taxon>
        <taxon>Pseudomonadota</taxon>
        <taxon>Betaproteobacteria</taxon>
        <taxon>Neisseriales</taxon>
        <taxon>Neisseriaceae</taxon>
        <taxon>Neisseria</taxon>
    </lineage>
</organism>
<name>DCD_NEIG1</name>
<dbReference type="EC" id="3.5.4.13" evidence="1"/>
<dbReference type="EMBL" id="AE004969">
    <property type="protein sequence ID" value="AAW89164.1"/>
    <property type="molecule type" value="Genomic_DNA"/>
</dbReference>
<dbReference type="RefSeq" id="WP_003687863.1">
    <property type="nucleotide sequence ID" value="NC_002946.2"/>
</dbReference>
<dbReference type="RefSeq" id="YP_207576.1">
    <property type="nucleotide sequence ID" value="NC_002946.2"/>
</dbReference>
<dbReference type="SMR" id="Q5F9H3"/>
<dbReference type="STRING" id="242231.NGO_0421"/>
<dbReference type="GeneID" id="66752760"/>
<dbReference type="KEGG" id="ngo:NGO_0421"/>
<dbReference type="PATRIC" id="fig|242231.10.peg.505"/>
<dbReference type="HOGENOM" id="CLU_087476_4_0_4"/>
<dbReference type="UniPathway" id="UPA00610">
    <property type="reaction ID" value="UER00665"/>
</dbReference>
<dbReference type="Proteomes" id="UP000000535">
    <property type="component" value="Chromosome"/>
</dbReference>
<dbReference type="GO" id="GO:0008829">
    <property type="term" value="F:dCTP deaminase activity"/>
    <property type="evidence" value="ECO:0007669"/>
    <property type="project" value="UniProtKB-UniRule"/>
</dbReference>
<dbReference type="GO" id="GO:0000166">
    <property type="term" value="F:nucleotide binding"/>
    <property type="evidence" value="ECO:0007669"/>
    <property type="project" value="UniProtKB-KW"/>
</dbReference>
<dbReference type="GO" id="GO:0006226">
    <property type="term" value="P:dUMP biosynthetic process"/>
    <property type="evidence" value="ECO:0007669"/>
    <property type="project" value="UniProtKB-UniPathway"/>
</dbReference>
<dbReference type="GO" id="GO:0006229">
    <property type="term" value="P:dUTP biosynthetic process"/>
    <property type="evidence" value="ECO:0007669"/>
    <property type="project" value="UniProtKB-UniRule"/>
</dbReference>
<dbReference type="GO" id="GO:0015949">
    <property type="term" value="P:nucleobase-containing small molecule interconversion"/>
    <property type="evidence" value="ECO:0007669"/>
    <property type="project" value="TreeGrafter"/>
</dbReference>
<dbReference type="CDD" id="cd07557">
    <property type="entry name" value="trimeric_dUTPase"/>
    <property type="match status" value="1"/>
</dbReference>
<dbReference type="FunFam" id="2.70.40.10:FF:000001">
    <property type="entry name" value="dCTP deaminase"/>
    <property type="match status" value="1"/>
</dbReference>
<dbReference type="Gene3D" id="2.70.40.10">
    <property type="match status" value="1"/>
</dbReference>
<dbReference type="HAMAP" id="MF_00146">
    <property type="entry name" value="dCTP_deaminase"/>
    <property type="match status" value="1"/>
</dbReference>
<dbReference type="InterPro" id="IPR011962">
    <property type="entry name" value="dCTP_deaminase"/>
</dbReference>
<dbReference type="InterPro" id="IPR036157">
    <property type="entry name" value="dUTPase-like_sf"/>
</dbReference>
<dbReference type="InterPro" id="IPR033704">
    <property type="entry name" value="dUTPase_trimeric"/>
</dbReference>
<dbReference type="NCBIfam" id="TIGR02274">
    <property type="entry name" value="dCTP_deam"/>
    <property type="match status" value="1"/>
</dbReference>
<dbReference type="PANTHER" id="PTHR42680">
    <property type="entry name" value="DCTP DEAMINASE"/>
    <property type="match status" value="1"/>
</dbReference>
<dbReference type="PANTHER" id="PTHR42680:SF3">
    <property type="entry name" value="DCTP DEAMINASE"/>
    <property type="match status" value="1"/>
</dbReference>
<dbReference type="Pfam" id="PF22769">
    <property type="entry name" value="DCD"/>
    <property type="match status" value="1"/>
</dbReference>
<dbReference type="SUPFAM" id="SSF51283">
    <property type="entry name" value="dUTPase-like"/>
    <property type="match status" value="1"/>
</dbReference>
<reference key="1">
    <citation type="submission" date="2003-03" db="EMBL/GenBank/DDBJ databases">
        <title>The complete genome sequence of Neisseria gonorrhoeae.</title>
        <authorList>
            <person name="Lewis L.A."/>
            <person name="Gillaspy A.F."/>
            <person name="McLaughlin R.E."/>
            <person name="Gipson M."/>
            <person name="Ducey T.F."/>
            <person name="Ownbey T."/>
            <person name="Hartman K."/>
            <person name="Nydick C."/>
            <person name="Carson M.B."/>
            <person name="Vaughn J."/>
            <person name="Thomson C."/>
            <person name="Song L."/>
            <person name="Lin S."/>
            <person name="Yuan X."/>
            <person name="Najar F."/>
            <person name="Zhan M."/>
            <person name="Ren Q."/>
            <person name="Zhu H."/>
            <person name="Qi S."/>
            <person name="Kenton S.M."/>
            <person name="Lai H."/>
            <person name="White J.D."/>
            <person name="Clifton S."/>
            <person name="Roe B.A."/>
            <person name="Dyer D.W."/>
        </authorList>
    </citation>
    <scope>NUCLEOTIDE SEQUENCE [LARGE SCALE GENOMIC DNA]</scope>
    <source>
        <strain>ATCC 700825 / FA 1090</strain>
    </source>
</reference>
<comment type="function">
    <text evidence="1">Catalyzes the deamination of dCTP to dUTP.</text>
</comment>
<comment type="catalytic activity">
    <reaction evidence="1">
        <text>dCTP + H2O + H(+) = dUTP + NH4(+)</text>
        <dbReference type="Rhea" id="RHEA:22680"/>
        <dbReference type="ChEBI" id="CHEBI:15377"/>
        <dbReference type="ChEBI" id="CHEBI:15378"/>
        <dbReference type="ChEBI" id="CHEBI:28938"/>
        <dbReference type="ChEBI" id="CHEBI:61481"/>
        <dbReference type="ChEBI" id="CHEBI:61555"/>
        <dbReference type="EC" id="3.5.4.13"/>
    </reaction>
</comment>
<comment type="pathway">
    <text evidence="1">Pyrimidine metabolism; dUMP biosynthesis; dUMP from dCTP (dUTP route): step 1/2.</text>
</comment>
<comment type="subunit">
    <text evidence="1">Homotrimer.</text>
</comment>
<comment type="similarity">
    <text evidence="1">Belongs to the dCTP deaminase family.</text>
</comment>
<gene>
    <name evidence="1" type="primary">dcd</name>
    <name type="ordered locus">NGO_0421</name>
</gene>
<protein>
    <recommendedName>
        <fullName evidence="1">dCTP deaminase</fullName>
        <ecNumber evidence="1">3.5.4.13</ecNumber>
    </recommendedName>
    <alternativeName>
        <fullName evidence="1">Deoxycytidine triphosphate deaminase</fullName>
    </alternativeName>
</protein>
<evidence type="ECO:0000255" key="1">
    <source>
        <dbReference type="HAMAP-Rule" id="MF_00146"/>
    </source>
</evidence>
<keyword id="KW-0378">Hydrolase</keyword>
<keyword id="KW-0546">Nucleotide metabolism</keyword>
<keyword id="KW-0547">Nucleotide-binding</keyword>
<keyword id="KW-1185">Reference proteome</keyword>
<accession>Q5F9H3</accession>
<proteinExistence type="inferred from homology"/>
<sequence>MSIKSDKWIRRMSEEFGMIDPFEPNQIKEADGQRIISYGTSSYGYDIRCANEFKIFTNINSTIVDPKNFDPKNFVTVEDDCCIIPPNSFALARTVEYFRIPRNVLTVCLGKSTYARCGIIVNVTPFEPEWEGYVTLEFSNTTPLPAKIYAGEGVAQVLFFESDEVCETSYKDRNGKYMGQTGVTLPKA</sequence>